<gene>
    <name evidence="10" type="primary">KIR2DS1</name>
    <name type="synonym">CD158H</name>
</gene>
<keyword id="KW-1003">Cell membrane</keyword>
<keyword id="KW-1015">Disulfide bond</keyword>
<keyword id="KW-0325">Glycoprotein</keyword>
<keyword id="KW-0393">Immunoglobulin domain</keyword>
<keyword id="KW-0472">Membrane</keyword>
<keyword id="KW-0675">Receptor</keyword>
<keyword id="KW-1185">Reference proteome</keyword>
<keyword id="KW-0677">Repeat</keyword>
<keyword id="KW-0732">Signal</keyword>
<keyword id="KW-0812">Transmembrane</keyword>
<keyword id="KW-1133">Transmembrane helix</keyword>
<accession>Q14954</accession>
<accession>K7QUS8</accession>
<accession>O43471</accession>
<organism>
    <name type="scientific">Homo sapiens</name>
    <name type="common">Human</name>
    <dbReference type="NCBI Taxonomy" id="9606"/>
    <lineage>
        <taxon>Eukaryota</taxon>
        <taxon>Metazoa</taxon>
        <taxon>Chordata</taxon>
        <taxon>Craniata</taxon>
        <taxon>Vertebrata</taxon>
        <taxon>Euteleostomi</taxon>
        <taxon>Mammalia</taxon>
        <taxon>Eutheria</taxon>
        <taxon>Euarchontoglires</taxon>
        <taxon>Primates</taxon>
        <taxon>Haplorrhini</taxon>
        <taxon>Catarrhini</taxon>
        <taxon>Hominidae</taxon>
        <taxon>Homo</taxon>
    </lineage>
</organism>
<protein>
    <recommendedName>
        <fullName evidence="9">Killer cell immunoglobulin-like receptor 2DS1</fullName>
    </recommendedName>
    <alternativeName>
        <fullName>CD158 antigen-like family member H</fullName>
    </alternativeName>
    <alternativeName>
        <fullName>MHC class I NK cell receptor Eb6 ActI</fullName>
    </alternativeName>
    <cdAntigenName>CD158h</cdAntigenName>
</protein>
<proteinExistence type="evidence at protein level"/>
<sequence length="304" mass="33618">MSLTVVSMACVGFFLLQGAWPHEGVHRKPSLLAHPGRLVKSEETVILQCWSDVMFEHFLLHREGMFNDTLRLIGEHHDGVSKANFSISRMKQDLAGTYRCYGSVTHSPYQLSAPSDPLDIVIIGLYEKPSLSAQPGPTVLAGENVTLSCSSRSSYDMYHLSREGEAHERRLPAGTKVNGTFQANFPLGPATHGGTYRCFGSFRDSPYEWSKSSDPLLVSVTGNPSNSWPSPTEPSSETGNPRHLHVLIGTSVVKIPFTILLFFLLHRWCSDKKNAAVMDQEPAGNRTVNSEDSDEQDHQEVSYA</sequence>
<reference key="1">
    <citation type="journal article" date="1996" name="J. Exp. Med.">
        <title>The human leukocyte antigen (HLA)-C-specific 'activatory' or 'inhibitory' natural killer cell receptors display highly homologous extracellular domains but differ in their transmembrane and intracytoplasmic portions.</title>
        <authorList>
            <person name="Biassoni R."/>
            <person name="Cantoni C."/>
            <person name="Falco M."/>
            <person name="Verdiani S."/>
            <person name="Bottino C."/>
            <person name="Vitale M."/>
            <person name="Conte R."/>
            <person name="Poggi A."/>
            <person name="Moretta A."/>
            <person name="Moretta L."/>
        </authorList>
    </citation>
    <scope>NUCLEOTIDE SEQUENCE [MRNA]</scope>
    <scope>VARIANT ARG-91</scope>
    <source>
        <tissue>Lymphoid tissue</tissue>
    </source>
</reference>
<reference key="2">
    <citation type="journal article" date="1997" name="Immunity">
        <title>Human diversity in killer cell inhibitory receptor genes.</title>
        <authorList>
            <person name="Uhrberg M."/>
            <person name="Valiante N.M."/>
            <person name="Shum B.P."/>
            <person name="Shilling H.G."/>
            <person name="Lienert-Weidenbach K."/>
            <person name="Corliss B."/>
            <person name="Tyan D."/>
            <person name="Lanier L.L."/>
            <person name="Parham P."/>
        </authorList>
    </citation>
    <scope>NUCLEOTIDE SEQUENCE [MRNA]</scope>
</reference>
<reference key="3">
    <citation type="journal article" date="2013" name="BMC Genomics">
        <title>Recombinant structures expand and contract inter and intragenic diversification at the KIR locus.</title>
        <authorList>
            <person name="Pyo C.W."/>
            <person name="Wang R."/>
            <person name="Vu Q."/>
            <person name="Cereb N."/>
            <person name="Yang S.Y."/>
            <person name="Duh F.M."/>
            <person name="Wolinsky S."/>
            <person name="Martin M.P."/>
            <person name="Carrington M."/>
            <person name="Geraghty D.E."/>
        </authorList>
    </citation>
    <scope>NUCLEOTIDE SEQUENCE [GENOMIC DNA]</scope>
</reference>
<reference key="4">
    <citation type="journal article" date="2004" name="Nature">
        <title>The DNA sequence and biology of human chromosome 19.</title>
        <authorList>
            <person name="Grimwood J."/>
            <person name="Gordon L.A."/>
            <person name="Olsen A.S."/>
            <person name="Terry A."/>
            <person name="Schmutz J."/>
            <person name="Lamerdin J.E."/>
            <person name="Hellsten U."/>
            <person name="Goodstein D."/>
            <person name="Couronne O."/>
            <person name="Tran-Gyamfi M."/>
            <person name="Aerts A."/>
            <person name="Altherr M."/>
            <person name="Ashworth L."/>
            <person name="Bajorek E."/>
            <person name="Black S."/>
            <person name="Branscomb E."/>
            <person name="Caenepeel S."/>
            <person name="Carrano A.V."/>
            <person name="Caoile C."/>
            <person name="Chan Y.M."/>
            <person name="Christensen M."/>
            <person name="Cleland C.A."/>
            <person name="Copeland A."/>
            <person name="Dalin E."/>
            <person name="Dehal P."/>
            <person name="Denys M."/>
            <person name="Detter J.C."/>
            <person name="Escobar J."/>
            <person name="Flowers D."/>
            <person name="Fotopulos D."/>
            <person name="Garcia C."/>
            <person name="Georgescu A.M."/>
            <person name="Glavina T."/>
            <person name="Gomez M."/>
            <person name="Gonzales E."/>
            <person name="Groza M."/>
            <person name="Hammon N."/>
            <person name="Hawkins T."/>
            <person name="Haydu L."/>
            <person name="Ho I."/>
            <person name="Huang W."/>
            <person name="Israni S."/>
            <person name="Jett J."/>
            <person name="Kadner K."/>
            <person name="Kimball H."/>
            <person name="Kobayashi A."/>
            <person name="Larionov V."/>
            <person name="Leem S.-H."/>
            <person name="Lopez F."/>
            <person name="Lou Y."/>
            <person name="Lowry S."/>
            <person name="Malfatti S."/>
            <person name="Martinez D."/>
            <person name="McCready P.M."/>
            <person name="Medina C."/>
            <person name="Morgan J."/>
            <person name="Nelson K."/>
            <person name="Nolan M."/>
            <person name="Ovcharenko I."/>
            <person name="Pitluck S."/>
            <person name="Pollard M."/>
            <person name="Popkie A.P."/>
            <person name="Predki P."/>
            <person name="Quan G."/>
            <person name="Ramirez L."/>
            <person name="Rash S."/>
            <person name="Retterer J."/>
            <person name="Rodriguez A."/>
            <person name="Rogers S."/>
            <person name="Salamov A."/>
            <person name="Salazar A."/>
            <person name="She X."/>
            <person name="Smith D."/>
            <person name="Slezak T."/>
            <person name="Solovyev V."/>
            <person name="Thayer N."/>
            <person name="Tice H."/>
            <person name="Tsai M."/>
            <person name="Ustaszewska A."/>
            <person name="Vo N."/>
            <person name="Wagner M."/>
            <person name="Wheeler J."/>
            <person name="Wu K."/>
            <person name="Xie G."/>
            <person name="Yang J."/>
            <person name="Dubchak I."/>
            <person name="Furey T.S."/>
            <person name="DeJong P."/>
            <person name="Dickson M."/>
            <person name="Gordon D."/>
            <person name="Eichler E.E."/>
            <person name="Pennacchio L.A."/>
            <person name="Richardson P."/>
            <person name="Stubbs L."/>
            <person name="Rokhsar D.S."/>
            <person name="Myers R.M."/>
            <person name="Rubin E.M."/>
            <person name="Lucas S.M."/>
        </authorList>
    </citation>
    <scope>NUCLEOTIDE SEQUENCE [LARGE SCALE GENOMIC DNA]</scope>
</reference>
<reference key="5">
    <citation type="journal article" date="2008" name="Eur. J. Immunol.">
        <title>Evidence that the KIR2DS5 gene codes for a surface receptor triggering natural killer cell function.</title>
        <authorList>
            <person name="Della Chiesa M."/>
            <person name="Romeo E."/>
            <person name="Falco M."/>
            <person name="Balsamo M."/>
            <person name="Augugliaro R."/>
            <person name="Moretta L."/>
            <person name="Bottino C."/>
            <person name="Moretta A."/>
            <person name="Vitale M."/>
        </authorList>
    </citation>
    <scope>FUNCTION</scope>
    <scope>SUBCELLULAR LOCATION</scope>
    <scope>TISSUE SPECIFICITY</scope>
</reference>
<reference key="6">
    <citation type="journal article" date="2008" name="Immunogenetics">
        <title>Extracellular domain alterations impact surface expression of stimulatory natural killer cell receptor KIR2DS5.</title>
        <authorList>
            <person name="Steiner N.K."/>
            <person name="Dakshanamurthy S."/>
            <person name="VandenBussche C.J."/>
            <person name="Hurley C.K."/>
        </authorList>
    </citation>
    <scope>SUBCELLULAR LOCATION</scope>
</reference>
<reference key="7">
    <citation type="journal article" date="2013" name="J. Leukoc. Biol.">
        <title>DAP12 impacts trafficking and surface stability of killer immunoglobulin-like receptors on natural killer cells.</title>
        <authorList>
            <person name="Mulrooney T.J."/>
            <person name="Posch P.E."/>
            <person name="Hurley C.K."/>
        </authorList>
    </citation>
    <scope>INTERACTION WITH TYROBP</scope>
    <scope>SUBCELLULAR LOCATION</scope>
</reference>
<name>KI2S1_HUMAN</name>
<feature type="signal peptide" evidence="1">
    <location>
        <begin position="1"/>
        <end position="21"/>
    </location>
</feature>
<feature type="chain" id="PRO_0000015082" description="Killer cell immunoglobulin-like receptor 2DS1">
    <location>
        <begin position="22"/>
        <end position="304"/>
    </location>
</feature>
<feature type="topological domain" description="Extracellular" evidence="3">
    <location>
        <begin position="22"/>
        <end position="245"/>
    </location>
</feature>
<feature type="transmembrane region" description="Helical" evidence="3">
    <location>
        <begin position="246"/>
        <end position="264"/>
    </location>
</feature>
<feature type="topological domain" description="Cytoplasmic" evidence="3">
    <location>
        <begin position="265"/>
        <end position="304"/>
    </location>
</feature>
<feature type="domain" description="Ig-like C2-type 1">
    <location>
        <begin position="42"/>
        <end position="107"/>
    </location>
</feature>
<feature type="domain" description="Ig-like C2-type 2">
    <location>
        <begin position="142"/>
        <end position="205"/>
    </location>
</feature>
<feature type="region of interest" description="Disordered" evidence="4">
    <location>
        <begin position="220"/>
        <end position="239"/>
    </location>
</feature>
<feature type="region of interest" description="Disordered" evidence="4">
    <location>
        <begin position="280"/>
        <end position="304"/>
    </location>
</feature>
<feature type="compositionally biased region" description="Low complexity" evidence="4">
    <location>
        <begin position="223"/>
        <end position="239"/>
    </location>
</feature>
<feature type="glycosylation site" description="N-linked (GlcNAc...) asparagine" evidence="3">
    <location>
        <position position="67"/>
    </location>
</feature>
<feature type="glycosylation site" description="N-linked (GlcNAc...) asparagine" evidence="3">
    <location>
        <position position="84"/>
    </location>
</feature>
<feature type="glycosylation site" description="N-linked (GlcNAc...) asparagine" evidence="3">
    <location>
        <position position="144"/>
    </location>
</feature>
<feature type="glycosylation site" description="N-linked (GlcNAc...) asparagine" evidence="3">
    <location>
        <position position="178"/>
    </location>
</feature>
<feature type="disulfide bond" evidence="2">
    <location>
        <begin position="49"/>
        <end position="100"/>
    </location>
</feature>
<feature type="disulfide bond" evidence="2">
    <location>
        <begin position="149"/>
        <end position="198"/>
    </location>
</feature>
<feature type="sequence variant" id="VAR_010318" description="In dbSNP:rs687485." evidence="7 8">
    <original>K</original>
    <variation>R</variation>
    <location>
        <position position="91"/>
    </location>
</feature>
<feature type="sequence variant" id="VAR_059419" description="In dbSNP:rs687885.">
    <original>L</original>
    <variation>V</variation>
    <location>
        <position position="111"/>
    </location>
</feature>
<dbReference type="EMBL" id="X89892">
    <property type="protein sequence ID" value="CAA61982.1"/>
    <property type="molecule type" value="mRNA"/>
</dbReference>
<dbReference type="EMBL" id="AF022046">
    <property type="protein sequence ID" value="AAB95319.1"/>
    <property type="molecule type" value="mRNA"/>
</dbReference>
<dbReference type="EMBL" id="JX008030">
    <property type="protein sequence ID" value="AFV74766.1"/>
    <property type="molecule type" value="Genomic_DNA"/>
</dbReference>
<dbReference type="EMBL" id="KP420440">
    <property type="protein sequence ID" value="AJI81009.1"/>
    <property type="molecule type" value="Genomic_DNA"/>
</dbReference>
<dbReference type="EMBL" id="KP420441">
    <property type="protein sequence ID" value="AMR59360.1"/>
    <property type="molecule type" value="Genomic_DNA"/>
</dbReference>
<dbReference type="EMBL" id="AL133414">
    <property type="status" value="NOT_ANNOTATED_CDS"/>
    <property type="molecule type" value="Genomic_DNA"/>
</dbReference>
<dbReference type="EMBL" id="KU645196">
    <property type="protein sequence ID" value="ANJ04800.1"/>
    <property type="molecule type" value="Genomic_DNA"/>
</dbReference>
<dbReference type="EMBL" id="CU459006">
    <property type="status" value="NOT_ANNOTATED_CDS"/>
    <property type="molecule type" value="Genomic_DNA"/>
</dbReference>
<dbReference type="EMBL" id="GU182339">
    <property type="status" value="NOT_ANNOTATED_CDS"/>
    <property type="molecule type" value="Genomic_DNA"/>
</dbReference>
<dbReference type="EMBL" id="GU182352">
    <property type="status" value="NOT_ANNOTATED_CDS"/>
    <property type="molecule type" value="Genomic_DNA"/>
</dbReference>
<dbReference type="EMBL" id="GU182355">
    <property type="status" value="NOT_ANNOTATED_CDS"/>
    <property type="molecule type" value="Genomic_DNA"/>
</dbReference>
<dbReference type="EMBL" id="GU182359">
    <property type="status" value="NOT_ANNOTATED_CDS"/>
    <property type="molecule type" value="Genomic_DNA"/>
</dbReference>
<dbReference type="RefSeq" id="NP_055327.1">
    <property type="nucleotide sequence ID" value="NM_014512.1"/>
</dbReference>
<dbReference type="SMR" id="Q14954"/>
<dbReference type="BioGRID" id="110007">
    <property type="interactions" value="2"/>
</dbReference>
<dbReference type="FunCoup" id="Q14954">
    <property type="interactions" value="538"/>
</dbReference>
<dbReference type="IntAct" id="Q14954">
    <property type="interactions" value="5"/>
</dbReference>
<dbReference type="GlyCosmos" id="Q14954">
    <property type="glycosylation" value="4 sites, No reported glycans"/>
</dbReference>
<dbReference type="GlyGen" id="Q14954">
    <property type="glycosylation" value="6 sites"/>
</dbReference>
<dbReference type="iPTMnet" id="Q14954"/>
<dbReference type="PhosphoSitePlus" id="Q14954"/>
<dbReference type="BioMuta" id="KIR2DS1"/>
<dbReference type="DMDM" id="13124324"/>
<dbReference type="MassIVE" id="Q14954"/>
<dbReference type="PeptideAtlas" id="Q14954"/>
<dbReference type="ProteomicsDB" id="60257"/>
<dbReference type="DNASU" id="3806"/>
<dbReference type="Ensembl" id="ENST00000611996.1">
    <property type="protein sequence ID" value="ENSP00000482170.1"/>
    <property type="gene ID" value="ENSG00000276327.1"/>
</dbReference>
<dbReference type="Ensembl" id="ENST00000612447.1">
    <property type="protein sequence ID" value="ENSP00000481628.1"/>
    <property type="gene ID" value="ENSG00000278304.1"/>
</dbReference>
<dbReference type="Ensembl" id="ENST00000617661.1">
    <property type="protein sequence ID" value="ENSP00000483434.1"/>
    <property type="gene ID" value="ENSG00000278120.1"/>
</dbReference>
<dbReference type="Ensembl" id="ENST00000618071.1">
    <property type="protein sequence ID" value="ENSP00000482900.1"/>
    <property type="gene ID" value="ENSG00000273603.1"/>
</dbReference>
<dbReference type="Ensembl" id="ENST00000621207.1">
    <property type="protein sequence ID" value="ENSP00000482060.1"/>
    <property type="gene ID" value="ENSG00000275421.1"/>
</dbReference>
<dbReference type="Ensembl" id="ENST00000622039.1">
    <property type="protein sequence ID" value="ENSP00000478711.1"/>
    <property type="gene ID" value="ENSG00000273517.1"/>
</dbReference>
<dbReference type="Ensembl" id="ENST00000638832.1">
    <property type="protein sequence ID" value="ENSP00000491232.1"/>
    <property type="gene ID" value="ENSG00000284560.3"/>
</dbReference>
<dbReference type="Ensembl" id="ENST00000639093.1">
    <property type="protein sequence ID" value="ENSP00000492239.1"/>
    <property type="gene ID" value="ENSG00000284150.3"/>
</dbReference>
<dbReference type="Ensembl" id="ENST00000639232.1">
    <property type="protein sequence ID" value="ENSP00000492347.1"/>
    <property type="gene ID" value="ENSG00000284120.3"/>
</dbReference>
<dbReference type="Ensembl" id="ENST00000643062.1">
    <property type="protein sequence ID" value="ENSP00000494266.1"/>
    <property type="gene ID" value="ENSG00000284120.3"/>
</dbReference>
<dbReference type="Ensembl" id="ENST00000644318.1">
    <property type="protein sequence ID" value="ENSP00000495438.1"/>
    <property type="gene ID" value="ENSG00000284150.3"/>
</dbReference>
<dbReference type="Ensembl" id="ENST00000645834.1">
    <property type="protein sequence ID" value="ENSP00000494623.1"/>
    <property type="gene ID" value="ENSG00000284560.3"/>
</dbReference>
<dbReference type="GeneID" id="3806"/>
<dbReference type="KEGG" id="hsa:3806"/>
<dbReference type="MANE-Select" id="ENST00000621207.1">
    <property type="protein sequence ID" value="ENSP00000482060.1"/>
    <property type="RefSeq nucleotide sequence ID" value="NM_014512.1"/>
    <property type="RefSeq protein sequence ID" value="NP_055327.1"/>
</dbReference>
<dbReference type="UCSC" id="uc061dvn.1">
    <property type="organism name" value="human"/>
</dbReference>
<dbReference type="AGR" id="HGNC:6333"/>
<dbReference type="CTD" id="3806"/>
<dbReference type="DisGeNET" id="3806"/>
<dbReference type="GeneCards" id="KIR2DS1"/>
<dbReference type="HGNC" id="HGNC:6333">
    <property type="gene designation" value="KIR2DS1"/>
</dbReference>
<dbReference type="MIM" id="604952">
    <property type="type" value="gene"/>
</dbReference>
<dbReference type="neXtProt" id="NX_Q14954"/>
<dbReference type="PharmGKB" id="PA30118"/>
<dbReference type="InParanoid" id="Q14954"/>
<dbReference type="PAN-GO" id="Q14954">
    <property type="GO annotations" value="1 GO annotation based on evolutionary models"/>
</dbReference>
<dbReference type="PathwayCommons" id="Q14954"/>
<dbReference type="Reactome" id="R-HSA-198933">
    <property type="pathway name" value="Immunoregulatory interactions between a Lymphoid and a non-Lymphoid cell"/>
</dbReference>
<dbReference type="Reactome" id="R-HSA-2172127">
    <property type="pathway name" value="DAP12 interactions"/>
</dbReference>
<dbReference type="SignaLink" id="Q14954"/>
<dbReference type="BioGRID-ORCS" id="3806">
    <property type="hits" value="0 hits in 31 CRISPR screens"/>
</dbReference>
<dbReference type="GenomeRNAi" id="3806"/>
<dbReference type="Pharos" id="Q14954">
    <property type="development level" value="Tdark"/>
</dbReference>
<dbReference type="PRO" id="PR:Q14954"/>
<dbReference type="Proteomes" id="UP000005640">
    <property type="component" value="Unplaced"/>
</dbReference>
<dbReference type="RNAct" id="Q14954">
    <property type="molecule type" value="protein"/>
</dbReference>
<dbReference type="GO" id="GO:0016020">
    <property type="term" value="C:membrane"/>
    <property type="evidence" value="ECO:0000303"/>
    <property type="project" value="UniProtKB"/>
</dbReference>
<dbReference type="GO" id="GO:0005886">
    <property type="term" value="C:plasma membrane"/>
    <property type="evidence" value="ECO:0000314"/>
    <property type="project" value="UniProtKB"/>
</dbReference>
<dbReference type="GO" id="GO:0004888">
    <property type="term" value="F:transmembrane signaling receptor activity"/>
    <property type="evidence" value="ECO:0000303"/>
    <property type="project" value="UniProtKB"/>
</dbReference>
<dbReference type="GO" id="GO:0006955">
    <property type="term" value="P:immune response"/>
    <property type="evidence" value="ECO:0000303"/>
    <property type="project" value="UniProtKB"/>
</dbReference>
<dbReference type="GO" id="GO:0002764">
    <property type="term" value="P:immune response-regulating signaling pathway"/>
    <property type="evidence" value="ECO:0000318"/>
    <property type="project" value="GO_Central"/>
</dbReference>
<dbReference type="FunFam" id="2.60.40.10:FF:000033">
    <property type="entry name" value="Killer cell immunoglobulin-like receptor"/>
    <property type="match status" value="1"/>
</dbReference>
<dbReference type="FunFam" id="2.60.40.10:FF:000049">
    <property type="entry name" value="Leukocyte immunoglobulin-like receptor subfamily B member 1"/>
    <property type="match status" value="1"/>
</dbReference>
<dbReference type="Gene3D" id="2.60.40.10">
    <property type="entry name" value="Immunoglobulins"/>
    <property type="match status" value="2"/>
</dbReference>
<dbReference type="InterPro" id="IPR036179">
    <property type="entry name" value="Ig-like_dom_sf"/>
</dbReference>
<dbReference type="InterPro" id="IPR013783">
    <property type="entry name" value="Ig-like_fold"/>
</dbReference>
<dbReference type="InterPro" id="IPR050412">
    <property type="entry name" value="Ig-like_Receptors_ImmuneReg"/>
</dbReference>
<dbReference type="InterPro" id="IPR003599">
    <property type="entry name" value="Ig_sub"/>
</dbReference>
<dbReference type="InterPro" id="IPR013151">
    <property type="entry name" value="Immunoglobulin_dom"/>
</dbReference>
<dbReference type="PANTHER" id="PTHR11738:SF168">
    <property type="entry name" value="IMMUNOGLOBULIN SUBTYPE DOMAIN-CONTAINING PROTEIN-RELATED"/>
    <property type="match status" value="1"/>
</dbReference>
<dbReference type="PANTHER" id="PTHR11738">
    <property type="entry name" value="MHC CLASS I NK CELL RECEPTOR"/>
    <property type="match status" value="1"/>
</dbReference>
<dbReference type="Pfam" id="PF00047">
    <property type="entry name" value="ig"/>
    <property type="match status" value="2"/>
</dbReference>
<dbReference type="SMART" id="SM00409">
    <property type="entry name" value="IG"/>
    <property type="match status" value="2"/>
</dbReference>
<dbReference type="SUPFAM" id="SSF48726">
    <property type="entry name" value="Immunoglobulin"/>
    <property type="match status" value="2"/>
</dbReference>
<comment type="function">
    <text evidence="8">Receptor on natural killer (NK) cells for some HLA-C alleles such as w6. Does not inhibit the activity of NK cells.</text>
</comment>
<comment type="subunit">
    <text evidence="6">Interacts with the adapter protein TYROBP/DAP12; the interaction enhances KIR2DS1 stability at the cell surface.</text>
</comment>
<comment type="interaction">
    <interactant intactId="EBI-2865976">
        <id>Q14954</id>
    </interactant>
    <interactant intactId="EBI-1051396">
        <id>P10321</id>
        <label>HLA-C</label>
    </interactant>
    <organismsDiffer>false</organismsDiffer>
    <experiments>7</experiments>
</comment>
<comment type="subcellular location">
    <subcellularLocation>
        <location evidence="5 6 8">Cell membrane</location>
        <topology evidence="3">Single-pass type I membrane protein</topology>
    </subcellularLocation>
</comment>
<comment type="tissue specificity">
    <text evidence="8">Expressed by NK cells.</text>
</comment>
<comment type="similarity">
    <text evidence="9">Belongs to the immunoglobulin superfamily.</text>
</comment>
<comment type="caution">
    <text evidence="9">The KIR2DS1 gene is not directly represented on the GRCh38 primary reference genome assembly but on alternate loci of that assembly.</text>
</comment>
<evidence type="ECO:0000250" key="1"/>
<evidence type="ECO:0000250" key="2">
    <source>
        <dbReference type="UniProtKB" id="P43626"/>
    </source>
</evidence>
<evidence type="ECO:0000255" key="3"/>
<evidence type="ECO:0000256" key="4">
    <source>
        <dbReference type="SAM" id="MobiDB-lite"/>
    </source>
</evidence>
<evidence type="ECO:0000269" key="5">
    <source>
    </source>
</evidence>
<evidence type="ECO:0000269" key="6">
    <source>
    </source>
</evidence>
<evidence type="ECO:0000269" key="7">
    <source>
    </source>
</evidence>
<evidence type="ECO:0000269" key="8">
    <source>
    </source>
</evidence>
<evidence type="ECO:0000305" key="9"/>
<evidence type="ECO:0000312" key="10">
    <source>
        <dbReference type="HGNC" id="HGNC:6333"/>
    </source>
</evidence>